<reference key="1">
    <citation type="journal article" date="2004" name="PLoS Biol.">
        <title>Phylogenomics of the reproductive parasite Wolbachia pipientis wMel: a streamlined genome overrun by mobile genetic elements.</title>
        <authorList>
            <person name="Wu M."/>
            <person name="Sun L.V."/>
            <person name="Vamathevan J.J."/>
            <person name="Riegler M."/>
            <person name="DeBoy R.T."/>
            <person name="Brownlie J.C."/>
            <person name="McGraw E.A."/>
            <person name="Martin W."/>
            <person name="Esser C."/>
            <person name="Ahmadinejad N."/>
            <person name="Wiegand C."/>
            <person name="Madupu R."/>
            <person name="Beanan M.J."/>
            <person name="Brinkac L.M."/>
            <person name="Daugherty S.C."/>
            <person name="Durkin A.S."/>
            <person name="Kolonay J.F."/>
            <person name="Nelson W.C."/>
            <person name="Mohamoud Y."/>
            <person name="Lee P."/>
            <person name="Berry K.J."/>
            <person name="Young M.B."/>
            <person name="Utterback T.R."/>
            <person name="Weidman J.F."/>
            <person name="Nierman W.C."/>
            <person name="Paulsen I.T."/>
            <person name="Nelson K.E."/>
            <person name="Tettelin H."/>
            <person name="O'Neill S.L."/>
            <person name="Eisen J.A."/>
        </authorList>
    </citation>
    <scope>NUCLEOTIDE SEQUENCE [LARGE SCALE GENOMIC DNA]</scope>
</reference>
<evidence type="ECO:0000255" key="1">
    <source>
        <dbReference type="HAMAP-Rule" id="MF_00281"/>
    </source>
</evidence>
<accession>Q73IM5</accession>
<name>SYFA_WOLPM</name>
<keyword id="KW-0030">Aminoacyl-tRNA synthetase</keyword>
<keyword id="KW-0067">ATP-binding</keyword>
<keyword id="KW-0963">Cytoplasm</keyword>
<keyword id="KW-0436">Ligase</keyword>
<keyword id="KW-0460">Magnesium</keyword>
<keyword id="KW-0479">Metal-binding</keyword>
<keyword id="KW-0547">Nucleotide-binding</keyword>
<keyword id="KW-0648">Protein biosynthesis</keyword>
<organism>
    <name type="scientific">Wolbachia pipientis wMel</name>
    <dbReference type="NCBI Taxonomy" id="163164"/>
    <lineage>
        <taxon>Bacteria</taxon>
        <taxon>Pseudomonadati</taxon>
        <taxon>Pseudomonadota</taxon>
        <taxon>Alphaproteobacteria</taxon>
        <taxon>Rickettsiales</taxon>
        <taxon>Anaplasmataceae</taxon>
        <taxon>Wolbachieae</taxon>
        <taxon>Wolbachia</taxon>
    </lineage>
</organism>
<sequence>MNKELLDDILSLEDKAVSEIENASSLQDLEKVRLSYLGKKGVIKAYFDNLKEIEDAGKKRNLGEVINVLRNKLDQLIMSKENILKAEEVNFKLQNEAVDITLSARPEKIGKVHPLSKVLNEVKLIFAHMGFKAVDGPDIEDEFHVFDALNTPSHHPAREEQDTFYLKNKIDDKRMVLRTHTSSVQIRTMEKTKKFPIKIVAAGRVYRNDFDATHTPMFHQIEGLYVDENVNMGQLKFTIHHFLNKFFGDKGLKIRFRNSFFPFTEPSAEVDISYKGSKWIEVLGCGMTHPNVFQNVGIDHTKYNGFAFGIGIERLAMLKYQISDLRSFYDNKISWLDHYGFHFSSLR</sequence>
<proteinExistence type="inferred from homology"/>
<dbReference type="EC" id="6.1.1.20" evidence="1"/>
<dbReference type="EMBL" id="AE017196">
    <property type="protein sequence ID" value="AAS13886.1"/>
    <property type="molecule type" value="Genomic_DNA"/>
</dbReference>
<dbReference type="RefSeq" id="WP_010962386.1">
    <property type="nucleotide sequence ID" value="NZ_OX384529.1"/>
</dbReference>
<dbReference type="SMR" id="Q73IM5"/>
<dbReference type="EnsemblBacteria" id="AAS13886">
    <property type="protein sequence ID" value="AAS13886"/>
    <property type="gene ID" value="WD_0132"/>
</dbReference>
<dbReference type="GeneID" id="70035624"/>
<dbReference type="KEGG" id="wol:WD_0132"/>
<dbReference type="eggNOG" id="COG0016">
    <property type="taxonomic scope" value="Bacteria"/>
</dbReference>
<dbReference type="Proteomes" id="UP000008215">
    <property type="component" value="Chromosome"/>
</dbReference>
<dbReference type="GO" id="GO:0005737">
    <property type="term" value="C:cytoplasm"/>
    <property type="evidence" value="ECO:0007669"/>
    <property type="project" value="UniProtKB-SubCell"/>
</dbReference>
<dbReference type="GO" id="GO:0005524">
    <property type="term" value="F:ATP binding"/>
    <property type="evidence" value="ECO:0007669"/>
    <property type="project" value="UniProtKB-UniRule"/>
</dbReference>
<dbReference type="GO" id="GO:0000287">
    <property type="term" value="F:magnesium ion binding"/>
    <property type="evidence" value="ECO:0007669"/>
    <property type="project" value="UniProtKB-UniRule"/>
</dbReference>
<dbReference type="GO" id="GO:0004826">
    <property type="term" value="F:phenylalanine-tRNA ligase activity"/>
    <property type="evidence" value="ECO:0007669"/>
    <property type="project" value="UniProtKB-UniRule"/>
</dbReference>
<dbReference type="GO" id="GO:0000049">
    <property type="term" value="F:tRNA binding"/>
    <property type="evidence" value="ECO:0007669"/>
    <property type="project" value="InterPro"/>
</dbReference>
<dbReference type="GO" id="GO:0006432">
    <property type="term" value="P:phenylalanyl-tRNA aminoacylation"/>
    <property type="evidence" value="ECO:0007669"/>
    <property type="project" value="UniProtKB-UniRule"/>
</dbReference>
<dbReference type="CDD" id="cd00496">
    <property type="entry name" value="PheRS_alpha_core"/>
    <property type="match status" value="1"/>
</dbReference>
<dbReference type="Gene3D" id="3.30.930.10">
    <property type="entry name" value="Bira Bifunctional Protein, Domain 2"/>
    <property type="match status" value="1"/>
</dbReference>
<dbReference type="HAMAP" id="MF_00281">
    <property type="entry name" value="Phe_tRNA_synth_alpha1"/>
    <property type="match status" value="1"/>
</dbReference>
<dbReference type="InterPro" id="IPR006195">
    <property type="entry name" value="aa-tRNA-synth_II"/>
</dbReference>
<dbReference type="InterPro" id="IPR045864">
    <property type="entry name" value="aa-tRNA-synth_II/BPL/LPL"/>
</dbReference>
<dbReference type="InterPro" id="IPR004529">
    <property type="entry name" value="Phe-tRNA-synth_IIc_asu"/>
</dbReference>
<dbReference type="InterPro" id="IPR004188">
    <property type="entry name" value="Phe-tRNA_ligase_II_N"/>
</dbReference>
<dbReference type="InterPro" id="IPR022911">
    <property type="entry name" value="Phe_tRNA_ligase_alpha1_bac"/>
</dbReference>
<dbReference type="InterPro" id="IPR002319">
    <property type="entry name" value="Phenylalanyl-tRNA_Synthase"/>
</dbReference>
<dbReference type="InterPro" id="IPR010978">
    <property type="entry name" value="tRNA-bd_arm"/>
</dbReference>
<dbReference type="NCBIfam" id="TIGR00468">
    <property type="entry name" value="pheS"/>
    <property type="match status" value="1"/>
</dbReference>
<dbReference type="PANTHER" id="PTHR11538:SF41">
    <property type="entry name" value="PHENYLALANINE--TRNA LIGASE, MITOCHONDRIAL"/>
    <property type="match status" value="1"/>
</dbReference>
<dbReference type="PANTHER" id="PTHR11538">
    <property type="entry name" value="PHENYLALANYL-TRNA SYNTHETASE"/>
    <property type="match status" value="1"/>
</dbReference>
<dbReference type="Pfam" id="PF02912">
    <property type="entry name" value="Phe_tRNA-synt_N"/>
    <property type="match status" value="1"/>
</dbReference>
<dbReference type="Pfam" id="PF01409">
    <property type="entry name" value="tRNA-synt_2d"/>
    <property type="match status" value="1"/>
</dbReference>
<dbReference type="SUPFAM" id="SSF55681">
    <property type="entry name" value="Class II aaRS and biotin synthetases"/>
    <property type="match status" value="1"/>
</dbReference>
<dbReference type="SUPFAM" id="SSF46589">
    <property type="entry name" value="tRNA-binding arm"/>
    <property type="match status" value="1"/>
</dbReference>
<dbReference type="PROSITE" id="PS50862">
    <property type="entry name" value="AA_TRNA_LIGASE_II"/>
    <property type="match status" value="1"/>
</dbReference>
<gene>
    <name evidence="1" type="primary">pheS</name>
    <name type="ordered locus">WD_0132</name>
</gene>
<protein>
    <recommendedName>
        <fullName evidence="1">Phenylalanine--tRNA ligase alpha subunit</fullName>
        <ecNumber evidence="1">6.1.1.20</ecNumber>
    </recommendedName>
    <alternativeName>
        <fullName evidence="1">Phenylalanyl-tRNA synthetase alpha subunit</fullName>
        <shortName evidence="1">PheRS</shortName>
    </alternativeName>
</protein>
<comment type="catalytic activity">
    <reaction evidence="1">
        <text>tRNA(Phe) + L-phenylalanine + ATP = L-phenylalanyl-tRNA(Phe) + AMP + diphosphate + H(+)</text>
        <dbReference type="Rhea" id="RHEA:19413"/>
        <dbReference type="Rhea" id="RHEA-COMP:9668"/>
        <dbReference type="Rhea" id="RHEA-COMP:9699"/>
        <dbReference type="ChEBI" id="CHEBI:15378"/>
        <dbReference type="ChEBI" id="CHEBI:30616"/>
        <dbReference type="ChEBI" id="CHEBI:33019"/>
        <dbReference type="ChEBI" id="CHEBI:58095"/>
        <dbReference type="ChEBI" id="CHEBI:78442"/>
        <dbReference type="ChEBI" id="CHEBI:78531"/>
        <dbReference type="ChEBI" id="CHEBI:456215"/>
        <dbReference type="EC" id="6.1.1.20"/>
    </reaction>
</comment>
<comment type="cofactor">
    <cofactor evidence="1">
        <name>Mg(2+)</name>
        <dbReference type="ChEBI" id="CHEBI:18420"/>
    </cofactor>
    <text evidence="1">Binds 2 magnesium ions per tetramer.</text>
</comment>
<comment type="subunit">
    <text evidence="1">Tetramer of two alpha and two beta subunits.</text>
</comment>
<comment type="subcellular location">
    <subcellularLocation>
        <location evidence="1">Cytoplasm</location>
    </subcellularLocation>
</comment>
<comment type="similarity">
    <text evidence="1">Belongs to the class-II aminoacyl-tRNA synthetase family. Phe-tRNA synthetase alpha subunit type 1 subfamily.</text>
</comment>
<feature type="chain" id="PRO_0000126796" description="Phenylalanine--tRNA ligase alpha subunit">
    <location>
        <begin position="1"/>
        <end position="347"/>
    </location>
</feature>
<feature type="binding site" evidence="1">
    <location>
        <position position="265"/>
    </location>
    <ligand>
        <name>Mg(2+)</name>
        <dbReference type="ChEBI" id="CHEBI:18420"/>
        <note>shared with beta subunit</note>
    </ligand>
</feature>